<protein>
    <recommendedName>
        <fullName evidence="1">Alanine racemase</fullName>
        <ecNumber evidence="1">5.1.1.1</ecNumber>
    </recommendedName>
</protein>
<reference key="1">
    <citation type="journal article" date="2011" name="Stand. Genomic Sci.">
        <title>Complete genome sequence of Rhodospirillum rubrum type strain (S1).</title>
        <authorList>
            <person name="Munk A.C."/>
            <person name="Copeland A."/>
            <person name="Lucas S."/>
            <person name="Lapidus A."/>
            <person name="Del Rio T.G."/>
            <person name="Barry K."/>
            <person name="Detter J.C."/>
            <person name="Hammon N."/>
            <person name="Israni S."/>
            <person name="Pitluck S."/>
            <person name="Brettin T."/>
            <person name="Bruce D."/>
            <person name="Han C."/>
            <person name="Tapia R."/>
            <person name="Gilna P."/>
            <person name="Schmutz J."/>
            <person name="Larimer F."/>
            <person name="Land M."/>
            <person name="Kyrpides N.C."/>
            <person name="Mavromatis K."/>
            <person name="Richardson P."/>
            <person name="Rohde M."/>
            <person name="Goeker M."/>
            <person name="Klenk H.P."/>
            <person name="Zhang Y."/>
            <person name="Roberts G.P."/>
            <person name="Reslewic S."/>
            <person name="Schwartz D.C."/>
        </authorList>
    </citation>
    <scope>NUCLEOTIDE SEQUENCE [LARGE SCALE GENOMIC DNA]</scope>
    <source>
        <strain>ATCC 11170 / ATH 1.1.1 / DSM 467 / LMG 4362 / NCIMB 8255 / S1</strain>
    </source>
</reference>
<gene>
    <name type="primary">alr</name>
    <name type="ordered locus">Rru_A0409</name>
</gene>
<keyword id="KW-0413">Isomerase</keyword>
<keyword id="KW-0663">Pyridoxal phosphate</keyword>
<keyword id="KW-1185">Reference proteome</keyword>
<proteinExistence type="inferred from homology"/>
<feature type="chain" id="PRO_1000138616" description="Alanine racemase">
    <location>
        <begin position="1"/>
        <end position="374"/>
    </location>
</feature>
<feature type="active site" description="Proton acceptor; specific for D-alanine" evidence="1">
    <location>
        <position position="40"/>
    </location>
</feature>
<feature type="active site" description="Proton acceptor; specific for L-alanine" evidence="1">
    <location>
        <position position="261"/>
    </location>
</feature>
<feature type="binding site" evidence="1">
    <location>
        <position position="139"/>
    </location>
    <ligand>
        <name>substrate</name>
    </ligand>
</feature>
<feature type="binding site" evidence="1">
    <location>
        <position position="309"/>
    </location>
    <ligand>
        <name>substrate</name>
    </ligand>
</feature>
<feature type="modified residue" description="N6-(pyridoxal phosphate)lysine" evidence="1">
    <location>
        <position position="40"/>
    </location>
</feature>
<name>ALR_RHORT</name>
<accession>Q2RXD1</accession>
<comment type="function">
    <text evidence="1">Catalyzes the interconversion of L-alanine and D-alanine. May also act on other amino acids.</text>
</comment>
<comment type="catalytic activity">
    <reaction evidence="1">
        <text>L-alanine = D-alanine</text>
        <dbReference type="Rhea" id="RHEA:20249"/>
        <dbReference type="ChEBI" id="CHEBI:57416"/>
        <dbReference type="ChEBI" id="CHEBI:57972"/>
        <dbReference type="EC" id="5.1.1.1"/>
    </reaction>
</comment>
<comment type="cofactor">
    <cofactor evidence="1">
        <name>pyridoxal 5'-phosphate</name>
        <dbReference type="ChEBI" id="CHEBI:597326"/>
    </cofactor>
</comment>
<comment type="pathway">
    <text evidence="1">Amino-acid biosynthesis; D-alanine biosynthesis; D-alanine from L-alanine: step 1/1.</text>
</comment>
<comment type="similarity">
    <text evidence="1">Belongs to the alanine racemase family.</text>
</comment>
<dbReference type="EC" id="5.1.1.1" evidence="1"/>
<dbReference type="EMBL" id="CP000230">
    <property type="protein sequence ID" value="ABC21214.1"/>
    <property type="molecule type" value="Genomic_DNA"/>
</dbReference>
<dbReference type="RefSeq" id="WP_011388168.1">
    <property type="nucleotide sequence ID" value="NC_007643.1"/>
</dbReference>
<dbReference type="RefSeq" id="YP_425501.1">
    <property type="nucleotide sequence ID" value="NC_007643.1"/>
</dbReference>
<dbReference type="SMR" id="Q2RXD1"/>
<dbReference type="STRING" id="269796.Rru_A0409"/>
<dbReference type="EnsemblBacteria" id="ABC21214">
    <property type="protein sequence ID" value="ABC21214"/>
    <property type="gene ID" value="Rru_A0409"/>
</dbReference>
<dbReference type="KEGG" id="rru:Rru_A0409"/>
<dbReference type="PATRIC" id="fig|269796.9.peg.465"/>
<dbReference type="eggNOG" id="COG0787">
    <property type="taxonomic scope" value="Bacteria"/>
</dbReference>
<dbReference type="HOGENOM" id="CLU_028393_1_1_5"/>
<dbReference type="PhylomeDB" id="Q2RXD1"/>
<dbReference type="UniPathway" id="UPA00042">
    <property type="reaction ID" value="UER00497"/>
</dbReference>
<dbReference type="Proteomes" id="UP000001929">
    <property type="component" value="Chromosome"/>
</dbReference>
<dbReference type="GO" id="GO:0005829">
    <property type="term" value="C:cytosol"/>
    <property type="evidence" value="ECO:0007669"/>
    <property type="project" value="TreeGrafter"/>
</dbReference>
<dbReference type="GO" id="GO:0008784">
    <property type="term" value="F:alanine racemase activity"/>
    <property type="evidence" value="ECO:0007669"/>
    <property type="project" value="UniProtKB-UniRule"/>
</dbReference>
<dbReference type="GO" id="GO:0030170">
    <property type="term" value="F:pyridoxal phosphate binding"/>
    <property type="evidence" value="ECO:0007669"/>
    <property type="project" value="UniProtKB-UniRule"/>
</dbReference>
<dbReference type="GO" id="GO:0030632">
    <property type="term" value="P:D-alanine biosynthetic process"/>
    <property type="evidence" value="ECO:0007669"/>
    <property type="project" value="UniProtKB-UniRule"/>
</dbReference>
<dbReference type="CDD" id="cd00430">
    <property type="entry name" value="PLPDE_III_AR"/>
    <property type="match status" value="1"/>
</dbReference>
<dbReference type="Gene3D" id="3.20.20.10">
    <property type="entry name" value="Alanine racemase"/>
    <property type="match status" value="1"/>
</dbReference>
<dbReference type="Gene3D" id="2.40.37.10">
    <property type="entry name" value="Lyase, Ornithine Decarboxylase, Chain A, domain 1"/>
    <property type="match status" value="1"/>
</dbReference>
<dbReference type="HAMAP" id="MF_01201">
    <property type="entry name" value="Ala_racemase"/>
    <property type="match status" value="1"/>
</dbReference>
<dbReference type="InterPro" id="IPR000821">
    <property type="entry name" value="Ala_racemase"/>
</dbReference>
<dbReference type="InterPro" id="IPR009006">
    <property type="entry name" value="Ala_racemase/Decarboxylase_C"/>
</dbReference>
<dbReference type="InterPro" id="IPR011079">
    <property type="entry name" value="Ala_racemase_C"/>
</dbReference>
<dbReference type="InterPro" id="IPR001608">
    <property type="entry name" value="Ala_racemase_N"/>
</dbReference>
<dbReference type="InterPro" id="IPR020622">
    <property type="entry name" value="Ala_racemase_pyridoxalP-BS"/>
</dbReference>
<dbReference type="InterPro" id="IPR029066">
    <property type="entry name" value="PLP-binding_barrel"/>
</dbReference>
<dbReference type="NCBIfam" id="TIGR00492">
    <property type="entry name" value="alr"/>
    <property type="match status" value="1"/>
</dbReference>
<dbReference type="PANTHER" id="PTHR30511">
    <property type="entry name" value="ALANINE RACEMASE"/>
    <property type="match status" value="1"/>
</dbReference>
<dbReference type="PANTHER" id="PTHR30511:SF0">
    <property type="entry name" value="ALANINE RACEMASE, CATABOLIC-RELATED"/>
    <property type="match status" value="1"/>
</dbReference>
<dbReference type="Pfam" id="PF00842">
    <property type="entry name" value="Ala_racemase_C"/>
    <property type="match status" value="1"/>
</dbReference>
<dbReference type="Pfam" id="PF01168">
    <property type="entry name" value="Ala_racemase_N"/>
    <property type="match status" value="1"/>
</dbReference>
<dbReference type="PRINTS" id="PR00992">
    <property type="entry name" value="ALARACEMASE"/>
</dbReference>
<dbReference type="SMART" id="SM01005">
    <property type="entry name" value="Ala_racemase_C"/>
    <property type="match status" value="1"/>
</dbReference>
<dbReference type="SUPFAM" id="SSF50621">
    <property type="entry name" value="Alanine racemase C-terminal domain-like"/>
    <property type="match status" value="1"/>
</dbReference>
<dbReference type="SUPFAM" id="SSF51419">
    <property type="entry name" value="PLP-binding barrel"/>
    <property type="match status" value="1"/>
</dbReference>
<dbReference type="PROSITE" id="PS00395">
    <property type="entry name" value="ALANINE_RACEMASE"/>
    <property type="match status" value="1"/>
</dbReference>
<organism>
    <name type="scientific">Rhodospirillum rubrum (strain ATCC 11170 / ATH 1.1.1 / DSM 467 / LMG 4362 / NCIMB 8255 / S1)</name>
    <dbReference type="NCBI Taxonomy" id="269796"/>
    <lineage>
        <taxon>Bacteria</taxon>
        <taxon>Pseudomonadati</taxon>
        <taxon>Pseudomonadota</taxon>
        <taxon>Alphaproteobacteria</taxon>
        <taxon>Rhodospirillales</taxon>
        <taxon>Rhodospirillaceae</taxon>
        <taxon>Rhodospirillum</taxon>
    </lineage>
</organism>
<evidence type="ECO:0000255" key="1">
    <source>
        <dbReference type="HAMAP-Rule" id="MF_01201"/>
    </source>
</evidence>
<sequence length="374" mass="39249">MGHEDRATALLTVDLDAIADNWLALRGRLRPGASCAGVVKANAYGLGARKVVPALLAAGCRDFVVAQIDEGLDILDLLPADARLFVLSGPPEGAEDEVLDSALIPVLNSPDQIDRWAKACARAGRKAPAALHVDTGMRRLGLTPLELDALLADPRPLAAFTPVLVMTHLACADEPDHPLNAEQRALFAAAAARFPGLRASLANTSGIFLGPEWHFDLARPGIGLYGGNPTVGTANPMRQVVKLQGKILQVRRIDTPLSVGYGATHTAPAGSTIATVGVGYADGFPRSAGNRAMGLLAGRSVPVVGRVSMDLLTFDVSDVPENLARPGAMIDLLGPDLSVDALADRADTVSYEILTRLGARYPRRYGGVREGSGQ</sequence>